<evidence type="ECO:0000255" key="1">
    <source>
        <dbReference type="HAMAP-Rule" id="MF_00729"/>
    </source>
</evidence>
<organism>
    <name type="scientific">Staphylococcus aureus (strain bovine RF122 / ET3-1)</name>
    <dbReference type="NCBI Taxonomy" id="273036"/>
    <lineage>
        <taxon>Bacteria</taxon>
        <taxon>Bacillati</taxon>
        <taxon>Bacillota</taxon>
        <taxon>Bacilli</taxon>
        <taxon>Bacillales</taxon>
        <taxon>Staphylococcaceae</taxon>
        <taxon>Staphylococcus</taxon>
    </lineage>
</organism>
<name>ALF1_STAAB</name>
<dbReference type="EC" id="4.1.2.13" evidence="1"/>
<dbReference type="EMBL" id="AJ938182">
    <property type="protein sequence ID" value="CAI82167.1"/>
    <property type="molecule type" value="Genomic_DNA"/>
</dbReference>
<dbReference type="RefSeq" id="WP_001031398.1">
    <property type="nucleotide sequence ID" value="NC_007622.1"/>
</dbReference>
<dbReference type="SMR" id="Q2YWF3"/>
<dbReference type="KEGG" id="sab:SAB2479"/>
<dbReference type="HOGENOM" id="CLU_081560_0_0_9"/>
<dbReference type="UniPathway" id="UPA00109">
    <property type="reaction ID" value="UER00183"/>
</dbReference>
<dbReference type="GO" id="GO:0004332">
    <property type="term" value="F:fructose-bisphosphate aldolase activity"/>
    <property type="evidence" value="ECO:0007669"/>
    <property type="project" value="UniProtKB-UniRule"/>
</dbReference>
<dbReference type="GO" id="GO:0006096">
    <property type="term" value="P:glycolytic process"/>
    <property type="evidence" value="ECO:0007669"/>
    <property type="project" value="UniProtKB-UniRule"/>
</dbReference>
<dbReference type="Gene3D" id="3.20.20.70">
    <property type="entry name" value="Aldolase class I"/>
    <property type="match status" value="1"/>
</dbReference>
<dbReference type="HAMAP" id="MF_00729">
    <property type="entry name" value="FBP_aldolase_1"/>
    <property type="match status" value="1"/>
</dbReference>
<dbReference type="InterPro" id="IPR013785">
    <property type="entry name" value="Aldolase_TIM"/>
</dbReference>
<dbReference type="InterPro" id="IPR000741">
    <property type="entry name" value="FBA_I"/>
</dbReference>
<dbReference type="InterPro" id="IPR023014">
    <property type="entry name" value="FBA_I_Gram+-type"/>
</dbReference>
<dbReference type="NCBIfam" id="NF003784">
    <property type="entry name" value="PRK05377.1"/>
    <property type="match status" value="1"/>
</dbReference>
<dbReference type="PANTHER" id="PTHR11627">
    <property type="entry name" value="FRUCTOSE-BISPHOSPHATE ALDOLASE"/>
    <property type="match status" value="1"/>
</dbReference>
<dbReference type="Pfam" id="PF00274">
    <property type="entry name" value="Glycolytic"/>
    <property type="match status" value="1"/>
</dbReference>
<dbReference type="SUPFAM" id="SSF51569">
    <property type="entry name" value="Aldolase"/>
    <property type="match status" value="1"/>
</dbReference>
<feature type="chain" id="PRO_1000045919" description="Fructose-bisphosphate aldolase class 1">
    <location>
        <begin position="1"/>
        <end position="296"/>
    </location>
</feature>
<feature type="active site" description="Proton acceptor" evidence="1">
    <location>
        <position position="175"/>
    </location>
</feature>
<feature type="active site" description="Schiff-base intermediate with dihydroxyacetone-P" evidence="1">
    <location>
        <position position="212"/>
    </location>
</feature>
<protein>
    <recommendedName>
        <fullName evidence="1">Fructose-bisphosphate aldolase class 1</fullName>
        <ecNumber evidence="1">4.1.2.13</ecNumber>
    </recommendedName>
    <alternativeName>
        <fullName>Fructose-bisphosphate aldolase class I</fullName>
        <shortName evidence="1">FBP aldolase</shortName>
    </alternativeName>
</protein>
<keyword id="KW-0324">Glycolysis</keyword>
<keyword id="KW-0456">Lyase</keyword>
<keyword id="KW-0704">Schiff base</keyword>
<gene>
    <name evidence="1" type="primary">fda</name>
    <name type="ordered locus">SAB2479</name>
</gene>
<comment type="catalytic activity">
    <reaction evidence="1">
        <text>beta-D-fructose 1,6-bisphosphate = D-glyceraldehyde 3-phosphate + dihydroxyacetone phosphate</text>
        <dbReference type="Rhea" id="RHEA:14729"/>
        <dbReference type="ChEBI" id="CHEBI:32966"/>
        <dbReference type="ChEBI" id="CHEBI:57642"/>
        <dbReference type="ChEBI" id="CHEBI:59776"/>
        <dbReference type="EC" id="4.1.2.13"/>
    </reaction>
</comment>
<comment type="pathway">
    <text evidence="1">Carbohydrate degradation; glycolysis; D-glyceraldehyde 3-phosphate and glycerone phosphate from D-glucose: step 4/4.</text>
</comment>
<comment type="similarity">
    <text evidence="1">Belongs to the class I fructose-bisphosphate aldolase family.</text>
</comment>
<accession>Q2YWF3</accession>
<proteinExistence type="inferred from homology"/>
<sequence length="296" mass="32927">MNKEQLEKMKNGKGFIAALDQSGGSTPKALKEYGINEDQYSNEDEMFQLVHDMRTRVVTSPSFSPDKILGAILFEQTMDREVEGKYTADYLADKGVVPFLKVDKGLAEEQNGVQLMKPIDNLDSLLDRANERHIFGTKMRSNILELNEQGIKDVVEQQFEVAKQIIAKGLVPIIEPEVNINAKDKAEIEKVLKAELKKGLDSLNADQLVMLKLTIPTEANLYKDLAEHPNVVRIVVLSGGYSREKANELLKDNAELIASFSRALASDLRAGQSKEEFDKALGDAVESIYDASVNKN</sequence>
<reference key="1">
    <citation type="journal article" date="2007" name="PLoS ONE">
        <title>Molecular correlates of host specialization in Staphylococcus aureus.</title>
        <authorList>
            <person name="Herron-Olson L."/>
            <person name="Fitzgerald J.R."/>
            <person name="Musser J.M."/>
            <person name="Kapur V."/>
        </authorList>
    </citation>
    <scope>NUCLEOTIDE SEQUENCE [LARGE SCALE GENOMIC DNA]</scope>
    <source>
        <strain>bovine RF122 / ET3-1</strain>
    </source>
</reference>